<accession>B0USL5</accession>
<sequence length="89" mass="10182">MSLSTEKKAAIVAEFGRDAKDTGSSEVQIALLTAQINHLQAHFSTHKKDHHGRRGLLRMVSRRRKLLDYLKRTDLAKYSEIIARLGLRR</sequence>
<reference key="1">
    <citation type="submission" date="2008-02" db="EMBL/GenBank/DDBJ databases">
        <title>Complete sequence of Haemophilus somnus 2336.</title>
        <authorList>
            <consortium name="US DOE Joint Genome Institute"/>
            <person name="Siddaramappa S."/>
            <person name="Duncan A.J."/>
            <person name="Challacombe J.F."/>
            <person name="Rainey D."/>
            <person name="Gillaspy A.F."/>
            <person name="Carson M."/>
            <person name="Gipson J."/>
            <person name="Gipson M."/>
            <person name="Bruce D."/>
            <person name="Detter J.C."/>
            <person name="Han C.S."/>
            <person name="Land M."/>
            <person name="Tapia R."/>
            <person name="Thompson L.S."/>
            <person name="Orvis J."/>
            <person name="Zaitshik J."/>
            <person name="Barnes G."/>
            <person name="Brettin T.S."/>
            <person name="Dyer D.W."/>
            <person name="Inzana T.J."/>
        </authorList>
    </citation>
    <scope>NUCLEOTIDE SEQUENCE [LARGE SCALE GENOMIC DNA]</scope>
    <source>
        <strain>2336</strain>
    </source>
</reference>
<feature type="chain" id="PRO_1000086805" description="Small ribosomal subunit protein uS15">
    <location>
        <begin position="1"/>
        <end position="89"/>
    </location>
</feature>
<gene>
    <name evidence="1" type="primary">rpsO</name>
    <name type="ordered locus">HSM_0776</name>
</gene>
<dbReference type="EMBL" id="CP000947">
    <property type="protein sequence ID" value="ACA32447.1"/>
    <property type="molecule type" value="Genomic_DNA"/>
</dbReference>
<dbReference type="RefSeq" id="WP_011608634.1">
    <property type="nucleotide sequence ID" value="NC_010519.1"/>
</dbReference>
<dbReference type="SMR" id="B0USL5"/>
<dbReference type="STRING" id="228400.HSM_0776"/>
<dbReference type="GeneID" id="31487065"/>
<dbReference type="KEGG" id="hsm:HSM_0776"/>
<dbReference type="HOGENOM" id="CLU_148518_0_0_6"/>
<dbReference type="GO" id="GO:0022627">
    <property type="term" value="C:cytosolic small ribosomal subunit"/>
    <property type="evidence" value="ECO:0007669"/>
    <property type="project" value="TreeGrafter"/>
</dbReference>
<dbReference type="GO" id="GO:0019843">
    <property type="term" value="F:rRNA binding"/>
    <property type="evidence" value="ECO:0007669"/>
    <property type="project" value="UniProtKB-UniRule"/>
</dbReference>
<dbReference type="GO" id="GO:0003735">
    <property type="term" value="F:structural constituent of ribosome"/>
    <property type="evidence" value="ECO:0007669"/>
    <property type="project" value="InterPro"/>
</dbReference>
<dbReference type="GO" id="GO:0006412">
    <property type="term" value="P:translation"/>
    <property type="evidence" value="ECO:0007669"/>
    <property type="project" value="UniProtKB-UniRule"/>
</dbReference>
<dbReference type="CDD" id="cd00353">
    <property type="entry name" value="Ribosomal_S15p_S13e"/>
    <property type="match status" value="1"/>
</dbReference>
<dbReference type="FunFam" id="1.10.287.10:FF:000002">
    <property type="entry name" value="30S ribosomal protein S15"/>
    <property type="match status" value="1"/>
</dbReference>
<dbReference type="Gene3D" id="6.10.250.3130">
    <property type="match status" value="1"/>
</dbReference>
<dbReference type="Gene3D" id="1.10.287.10">
    <property type="entry name" value="S15/NS1, RNA-binding"/>
    <property type="match status" value="1"/>
</dbReference>
<dbReference type="HAMAP" id="MF_01343_B">
    <property type="entry name" value="Ribosomal_uS15_B"/>
    <property type="match status" value="1"/>
</dbReference>
<dbReference type="InterPro" id="IPR000589">
    <property type="entry name" value="Ribosomal_uS15"/>
</dbReference>
<dbReference type="InterPro" id="IPR005290">
    <property type="entry name" value="Ribosomal_uS15_bac-type"/>
</dbReference>
<dbReference type="InterPro" id="IPR009068">
    <property type="entry name" value="uS15_NS1_RNA-bd_sf"/>
</dbReference>
<dbReference type="NCBIfam" id="TIGR00952">
    <property type="entry name" value="S15_bact"/>
    <property type="match status" value="1"/>
</dbReference>
<dbReference type="PANTHER" id="PTHR23321">
    <property type="entry name" value="RIBOSOMAL PROTEIN S15, BACTERIAL AND ORGANELLAR"/>
    <property type="match status" value="1"/>
</dbReference>
<dbReference type="PANTHER" id="PTHR23321:SF26">
    <property type="entry name" value="SMALL RIBOSOMAL SUBUNIT PROTEIN US15M"/>
    <property type="match status" value="1"/>
</dbReference>
<dbReference type="Pfam" id="PF00312">
    <property type="entry name" value="Ribosomal_S15"/>
    <property type="match status" value="1"/>
</dbReference>
<dbReference type="SMART" id="SM01387">
    <property type="entry name" value="Ribosomal_S15"/>
    <property type="match status" value="1"/>
</dbReference>
<dbReference type="SUPFAM" id="SSF47060">
    <property type="entry name" value="S15/NS1 RNA-binding domain"/>
    <property type="match status" value="1"/>
</dbReference>
<dbReference type="PROSITE" id="PS00362">
    <property type="entry name" value="RIBOSOMAL_S15"/>
    <property type="match status" value="1"/>
</dbReference>
<organism>
    <name type="scientific">Histophilus somni (strain 2336)</name>
    <name type="common">Haemophilus somnus</name>
    <dbReference type="NCBI Taxonomy" id="228400"/>
    <lineage>
        <taxon>Bacteria</taxon>
        <taxon>Pseudomonadati</taxon>
        <taxon>Pseudomonadota</taxon>
        <taxon>Gammaproteobacteria</taxon>
        <taxon>Pasteurellales</taxon>
        <taxon>Pasteurellaceae</taxon>
        <taxon>Histophilus</taxon>
    </lineage>
</organism>
<proteinExistence type="inferred from homology"/>
<keyword id="KW-0687">Ribonucleoprotein</keyword>
<keyword id="KW-0689">Ribosomal protein</keyword>
<keyword id="KW-0694">RNA-binding</keyword>
<keyword id="KW-0699">rRNA-binding</keyword>
<comment type="function">
    <text evidence="1">One of the primary rRNA binding proteins, it binds directly to 16S rRNA where it helps nucleate assembly of the platform of the 30S subunit by binding and bridging several RNA helices of the 16S rRNA.</text>
</comment>
<comment type="function">
    <text evidence="1">Forms an intersubunit bridge (bridge B4) with the 23S rRNA of the 50S subunit in the ribosome.</text>
</comment>
<comment type="subunit">
    <text evidence="1">Part of the 30S ribosomal subunit. Forms a bridge to the 50S subunit in the 70S ribosome, contacting the 23S rRNA.</text>
</comment>
<comment type="similarity">
    <text evidence="1">Belongs to the universal ribosomal protein uS15 family.</text>
</comment>
<protein>
    <recommendedName>
        <fullName evidence="1">Small ribosomal subunit protein uS15</fullName>
    </recommendedName>
    <alternativeName>
        <fullName evidence="2">30S ribosomal protein S15</fullName>
    </alternativeName>
</protein>
<name>RS15_HISS2</name>
<evidence type="ECO:0000255" key="1">
    <source>
        <dbReference type="HAMAP-Rule" id="MF_01343"/>
    </source>
</evidence>
<evidence type="ECO:0000305" key="2"/>